<organism>
    <name type="scientific">Mus musculus</name>
    <name type="common">Mouse</name>
    <dbReference type="NCBI Taxonomy" id="10090"/>
    <lineage>
        <taxon>Eukaryota</taxon>
        <taxon>Metazoa</taxon>
        <taxon>Chordata</taxon>
        <taxon>Craniata</taxon>
        <taxon>Vertebrata</taxon>
        <taxon>Euteleostomi</taxon>
        <taxon>Mammalia</taxon>
        <taxon>Eutheria</taxon>
        <taxon>Euarchontoglires</taxon>
        <taxon>Glires</taxon>
        <taxon>Rodentia</taxon>
        <taxon>Myomorpha</taxon>
        <taxon>Muroidea</taxon>
        <taxon>Muridae</taxon>
        <taxon>Murinae</taxon>
        <taxon>Mus</taxon>
        <taxon>Mus</taxon>
    </lineage>
</organism>
<proteinExistence type="evidence at protein level"/>
<feature type="initiator methionine" description="Removed" evidence="1">
    <location>
        <position position="1"/>
    </location>
</feature>
<feature type="chain" id="PRO_0000214948" description="Glia maturation factor gamma">
    <location>
        <begin position="2"/>
        <end position="142"/>
    </location>
</feature>
<feature type="domain" description="ADF-H" evidence="2">
    <location>
        <begin position="4"/>
        <end position="139"/>
    </location>
</feature>
<feature type="modified residue" description="N-acetylserine" evidence="1">
    <location>
        <position position="2"/>
    </location>
</feature>
<feature type="strand" evidence="5">
    <location>
        <begin position="7"/>
        <end position="10"/>
    </location>
</feature>
<feature type="helix" evidence="4">
    <location>
        <begin position="12"/>
        <end position="22"/>
    </location>
</feature>
<feature type="strand" evidence="4">
    <location>
        <begin position="30"/>
        <end position="37"/>
    </location>
</feature>
<feature type="turn" evidence="4">
    <location>
        <begin position="38"/>
        <end position="41"/>
    </location>
</feature>
<feature type="strand" evidence="4">
    <location>
        <begin position="42"/>
        <end position="51"/>
    </location>
</feature>
<feature type="helix" evidence="4">
    <location>
        <begin position="54"/>
        <end position="60"/>
    </location>
</feature>
<feature type="strand" evidence="4">
    <location>
        <begin position="63"/>
        <end position="65"/>
    </location>
</feature>
<feature type="strand" evidence="4">
    <location>
        <begin position="67"/>
        <end position="72"/>
    </location>
</feature>
<feature type="strand" evidence="5">
    <location>
        <begin position="78"/>
        <end position="80"/>
    </location>
</feature>
<feature type="strand" evidence="4">
    <location>
        <begin position="86"/>
        <end position="91"/>
    </location>
</feature>
<feature type="strand" evidence="5">
    <location>
        <begin position="94"/>
        <end position="96"/>
    </location>
</feature>
<feature type="helix" evidence="4">
    <location>
        <begin position="98"/>
        <end position="114"/>
    </location>
</feature>
<feature type="strand" evidence="4">
    <location>
        <begin position="120"/>
        <end position="125"/>
    </location>
</feature>
<feature type="helix" evidence="4">
    <location>
        <begin position="126"/>
        <end position="128"/>
    </location>
</feature>
<feature type="helix" evidence="4">
    <location>
        <begin position="131"/>
        <end position="139"/>
    </location>
</feature>
<reference key="1">
    <citation type="submission" date="2000-08" db="EMBL/GenBank/DDBJ databases">
        <title>Identification and full-length cloning of GMFB, a putative intracellular kinase regulator, expressed in proliferating telencephalon stem cells.</title>
        <authorList>
            <person name="Bourgeois F."/>
            <person name="Guimiot F."/>
            <person name="Levacher B."/>
            <person name="Mas C."/>
            <person name="Simonneau M.J."/>
        </authorList>
    </citation>
    <scope>NUCLEOTIDE SEQUENCE [MRNA]</scope>
    <source>
        <strain>Swiss/IOPS OF1</strain>
        <tissue>Liver</tissue>
    </source>
</reference>
<reference key="2">
    <citation type="submission" date="2002-11" db="EMBL/GenBank/DDBJ databases">
        <title>Structure of the mouse glia maturation factor-gamma gene and its promoter.</title>
        <authorList>
            <person name="Inoue Y."/>
            <person name="Asai K."/>
            <person name="Yamamoto M."/>
            <person name="Morikawa M."/>
            <person name="Iida J."/>
            <person name="Kishimoto T."/>
            <person name="Yamamoto N."/>
            <person name="Kawai Y."/>
        </authorList>
    </citation>
    <scope>NUCLEOTIDE SEQUENCE [GENOMIC DNA]</scope>
    <source>
        <strain>129/SvJ</strain>
    </source>
</reference>
<reference key="3">
    <citation type="journal article" date="2005" name="Science">
        <title>The transcriptional landscape of the mammalian genome.</title>
        <authorList>
            <person name="Carninci P."/>
            <person name="Kasukawa T."/>
            <person name="Katayama S."/>
            <person name="Gough J."/>
            <person name="Frith M.C."/>
            <person name="Maeda N."/>
            <person name="Oyama R."/>
            <person name="Ravasi T."/>
            <person name="Lenhard B."/>
            <person name="Wells C."/>
            <person name="Kodzius R."/>
            <person name="Shimokawa K."/>
            <person name="Bajic V.B."/>
            <person name="Brenner S.E."/>
            <person name="Batalov S."/>
            <person name="Forrest A.R."/>
            <person name="Zavolan M."/>
            <person name="Davis M.J."/>
            <person name="Wilming L.G."/>
            <person name="Aidinis V."/>
            <person name="Allen J.E."/>
            <person name="Ambesi-Impiombato A."/>
            <person name="Apweiler R."/>
            <person name="Aturaliya R.N."/>
            <person name="Bailey T.L."/>
            <person name="Bansal M."/>
            <person name="Baxter L."/>
            <person name="Beisel K.W."/>
            <person name="Bersano T."/>
            <person name="Bono H."/>
            <person name="Chalk A.M."/>
            <person name="Chiu K.P."/>
            <person name="Choudhary V."/>
            <person name="Christoffels A."/>
            <person name="Clutterbuck D.R."/>
            <person name="Crowe M.L."/>
            <person name="Dalla E."/>
            <person name="Dalrymple B.P."/>
            <person name="de Bono B."/>
            <person name="Della Gatta G."/>
            <person name="di Bernardo D."/>
            <person name="Down T."/>
            <person name="Engstrom P."/>
            <person name="Fagiolini M."/>
            <person name="Faulkner G."/>
            <person name="Fletcher C.F."/>
            <person name="Fukushima T."/>
            <person name="Furuno M."/>
            <person name="Futaki S."/>
            <person name="Gariboldi M."/>
            <person name="Georgii-Hemming P."/>
            <person name="Gingeras T.R."/>
            <person name="Gojobori T."/>
            <person name="Green R.E."/>
            <person name="Gustincich S."/>
            <person name="Harbers M."/>
            <person name="Hayashi Y."/>
            <person name="Hensch T.K."/>
            <person name="Hirokawa N."/>
            <person name="Hill D."/>
            <person name="Huminiecki L."/>
            <person name="Iacono M."/>
            <person name="Ikeo K."/>
            <person name="Iwama A."/>
            <person name="Ishikawa T."/>
            <person name="Jakt M."/>
            <person name="Kanapin A."/>
            <person name="Katoh M."/>
            <person name="Kawasawa Y."/>
            <person name="Kelso J."/>
            <person name="Kitamura H."/>
            <person name="Kitano H."/>
            <person name="Kollias G."/>
            <person name="Krishnan S.P."/>
            <person name="Kruger A."/>
            <person name="Kummerfeld S.K."/>
            <person name="Kurochkin I.V."/>
            <person name="Lareau L.F."/>
            <person name="Lazarevic D."/>
            <person name="Lipovich L."/>
            <person name="Liu J."/>
            <person name="Liuni S."/>
            <person name="McWilliam S."/>
            <person name="Madan Babu M."/>
            <person name="Madera M."/>
            <person name="Marchionni L."/>
            <person name="Matsuda H."/>
            <person name="Matsuzawa S."/>
            <person name="Miki H."/>
            <person name="Mignone F."/>
            <person name="Miyake S."/>
            <person name="Morris K."/>
            <person name="Mottagui-Tabar S."/>
            <person name="Mulder N."/>
            <person name="Nakano N."/>
            <person name="Nakauchi H."/>
            <person name="Ng P."/>
            <person name="Nilsson R."/>
            <person name="Nishiguchi S."/>
            <person name="Nishikawa S."/>
            <person name="Nori F."/>
            <person name="Ohara O."/>
            <person name="Okazaki Y."/>
            <person name="Orlando V."/>
            <person name="Pang K.C."/>
            <person name="Pavan W.J."/>
            <person name="Pavesi G."/>
            <person name="Pesole G."/>
            <person name="Petrovsky N."/>
            <person name="Piazza S."/>
            <person name="Reed J."/>
            <person name="Reid J.F."/>
            <person name="Ring B.Z."/>
            <person name="Ringwald M."/>
            <person name="Rost B."/>
            <person name="Ruan Y."/>
            <person name="Salzberg S.L."/>
            <person name="Sandelin A."/>
            <person name="Schneider C."/>
            <person name="Schoenbach C."/>
            <person name="Sekiguchi K."/>
            <person name="Semple C.A."/>
            <person name="Seno S."/>
            <person name="Sessa L."/>
            <person name="Sheng Y."/>
            <person name="Shibata Y."/>
            <person name="Shimada H."/>
            <person name="Shimada K."/>
            <person name="Silva D."/>
            <person name="Sinclair B."/>
            <person name="Sperling S."/>
            <person name="Stupka E."/>
            <person name="Sugiura K."/>
            <person name="Sultana R."/>
            <person name="Takenaka Y."/>
            <person name="Taki K."/>
            <person name="Tammoja K."/>
            <person name="Tan S.L."/>
            <person name="Tang S."/>
            <person name="Taylor M.S."/>
            <person name="Tegner J."/>
            <person name="Teichmann S.A."/>
            <person name="Ueda H.R."/>
            <person name="van Nimwegen E."/>
            <person name="Verardo R."/>
            <person name="Wei C.L."/>
            <person name="Yagi K."/>
            <person name="Yamanishi H."/>
            <person name="Zabarovsky E."/>
            <person name="Zhu S."/>
            <person name="Zimmer A."/>
            <person name="Hide W."/>
            <person name="Bult C."/>
            <person name="Grimmond S.M."/>
            <person name="Teasdale R.D."/>
            <person name="Liu E.T."/>
            <person name="Brusic V."/>
            <person name="Quackenbush J."/>
            <person name="Wahlestedt C."/>
            <person name="Mattick J.S."/>
            <person name="Hume D.A."/>
            <person name="Kai C."/>
            <person name="Sasaki D."/>
            <person name="Tomaru Y."/>
            <person name="Fukuda S."/>
            <person name="Kanamori-Katayama M."/>
            <person name="Suzuki M."/>
            <person name="Aoki J."/>
            <person name="Arakawa T."/>
            <person name="Iida J."/>
            <person name="Imamura K."/>
            <person name="Itoh M."/>
            <person name="Kato T."/>
            <person name="Kawaji H."/>
            <person name="Kawagashira N."/>
            <person name="Kawashima T."/>
            <person name="Kojima M."/>
            <person name="Kondo S."/>
            <person name="Konno H."/>
            <person name="Nakano K."/>
            <person name="Ninomiya N."/>
            <person name="Nishio T."/>
            <person name="Okada M."/>
            <person name="Plessy C."/>
            <person name="Shibata K."/>
            <person name="Shiraki T."/>
            <person name="Suzuki S."/>
            <person name="Tagami M."/>
            <person name="Waki K."/>
            <person name="Watahiki A."/>
            <person name="Okamura-Oho Y."/>
            <person name="Suzuki H."/>
            <person name="Kawai J."/>
            <person name="Hayashizaki Y."/>
        </authorList>
    </citation>
    <scope>NUCLEOTIDE SEQUENCE [LARGE SCALE MRNA]</scope>
    <source>
        <strain>C57BL/6J</strain>
        <tissue>Embryo</tissue>
        <tissue>Kidney</tissue>
        <tissue>Tongue</tissue>
    </source>
</reference>
<reference key="4">
    <citation type="journal article" date="2004" name="Genome Res.">
        <title>The status, quality, and expansion of the NIH full-length cDNA project: the Mammalian Gene Collection (MGC).</title>
        <authorList>
            <consortium name="The MGC Project Team"/>
        </authorList>
    </citation>
    <scope>NUCLEOTIDE SEQUENCE [LARGE SCALE MRNA]</scope>
</reference>
<reference key="5">
    <citation type="journal article" date="2010" name="Cell">
        <title>A tissue-specific atlas of mouse protein phosphorylation and expression.</title>
        <authorList>
            <person name="Huttlin E.L."/>
            <person name="Jedrychowski M.P."/>
            <person name="Elias J.E."/>
            <person name="Goswami T."/>
            <person name="Rad R."/>
            <person name="Beausoleil S.A."/>
            <person name="Villen J."/>
            <person name="Haas W."/>
            <person name="Sowa M.E."/>
            <person name="Gygi S.P."/>
        </authorList>
    </citation>
    <scope>IDENTIFICATION BY MASS SPECTROMETRY [LARGE SCALE ANALYSIS]</scope>
    <source>
        <tissue>Heart</tissue>
        <tissue>Kidney</tissue>
        <tissue>Liver</tissue>
        <tissue>Lung</tissue>
        <tissue>Spleen</tissue>
        <tissue>Testis</tissue>
    </source>
</reference>
<reference key="6">
    <citation type="journal article" date="2009" name="Protein Sci.">
        <title>NMR solution structures of actin depolymerizing factor homology domains.</title>
        <authorList>
            <person name="Goroncy A.K."/>
            <person name="Koshiba S."/>
            <person name="Tochio N."/>
            <person name="Tomizawa T."/>
            <person name="Sato M."/>
            <person name="Inoue M."/>
            <person name="Watanabe S."/>
            <person name="Hayashizaki Y."/>
            <person name="Tanaka A."/>
            <person name="Kigawa T."/>
            <person name="Yokoyama S."/>
        </authorList>
    </citation>
    <scope>STRUCTURE BY NMR OF 2-139</scope>
</reference>
<reference key="7">
    <citation type="submission" date="2009-02" db="PDB data bank">
        <title>Crystal structure of glia maturation factor-gamma (GMFG) from Mus musculus at 1.50 A resolution.</title>
        <authorList>
            <consortium name="Joint center for structural genomics (JCSG)"/>
        </authorList>
    </citation>
    <scope>X-RAY CRYSTALLOGRAPHY (1.35 ANGSTROMS)</scope>
</reference>
<evidence type="ECO:0000250" key="1">
    <source>
        <dbReference type="UniProtKB" id="O60234"/>
    </source>
</evidence>
<evidence type="ECO:0000255" key="2">
    <source>
        <dbReference type="PROSITE-ProRule" id="PRU00599"/>
    </source>
</evidence>
<evidence type="ECO:0000305" key="3"/>
<evidence type="ECO:0007829" key="4">
    <source>
        <dbReference type="PDB" id="1VKK"/>
    </source>
</evidence>
<evidence type="ECO:0007829" key="5">
    <source>
        <dbReference type="PDB" id="4JD2"/>
    </source>
</evidence>
<keyword id="KW-0002">3D-structure</keyword>
<keyword id="KW-0007">Acetylation</keyword>
<keyword id="KW-0339">Growth factor</keyword>
<keyword id="KW-1185">Reference proteome</keyword>
<sequence length="142" mass="16748">MSDSLVVCEVDPELKETLRKFRFRKETNNAAIIMKVDKDRQMVVLEDELQNISPEELKLELPERQPRFVVYSYKYVHDDGRVSYPLCFIFSSPVGCKPEQQMMYAGSKNRLVQTAELTKVFEIRTTDDLTETWLKEKLAFFR</sequence>
<name>GMFG_MOUSE</name>
<gene>
    <name type="primary">Gmfg</name>
</gene>
<dbReference type="EMBL" id="AF297221">
    <property type="protein sequence ID" value="AAG22804.1"/>
    <property type="molecule type" value="mRNA"/>
</dbReference>
<dbReference type="EMBL" id="AB097120">
    <property type="protein sequence ID" value="BAC76941.1"/>
    <property type="molecule type" value="Genomic_DNA"/>
</dbReference>
<dbReference type="EMBL" id="AK002834">
    <property type="protein sequence ID" value="BAB22392.1"/>
    <property type="molecule type" value="mRNA"/>
</dbReference>
<dbReference type="EMBL" id="AK009967">
    <property type="protein sequence ID" value="BAB26617.1"/>
    <property type="molecule type" value="mRNA"/>
</dbReference>
<dbReference type="EMBL" id="AK014214">
    <property type="protein sequence ID" value="BAB29210.1"/>
    <property type="molecule type" value="mRNA"/>
</dbReference>
<dbReference type="EMBL" id="BC011488">
    <property type="protein sequence ID" value="AAH11488.1"/>
    <property type="molecule type" value="mRNA"/>
</dbReference>
<dbReference type="CCDS" id="CCDS39859.1"/>
<dbReference type="CCDS" id="CCDS39860.1"/>
<dbReference type="RefSeq" id="NP_001034281.1">
    <property type="nucleotide sequence ID" value="NM_001039192.2"/>
</dbReference>
<dbReference type="RefSeq" id="NP_071307.1">
    <property type="nucleotide sequence ID" value="NM_022024.3"/>
</dbReference>
<dbReference type="PDB" id="1VKK">
    <property type="method" value="X-ray"/>
    <property type="resolution" value="1.35 A"/>
    <property type="chains" value="A=1-142"/>
</dbReference>
<dbReference type="PDB" id="1WFS">
    <property type="method" value="NMR"/>
    <property type="chains" value="A=2-139"/>
</dbReference>
<dbReference type="PDB" id="4JD2">
    <property type="method" value="X-ray"/>
    <property type="resolution" value="3.08 A"/>
    <property type="chains" value="H=1-142"/>
</dbReference>
<dbReference type="PDBsum" id="1VKK"/>
<dbReference type="PDBsum" id="1WFS"/>
<dbReference type="PDBsum" id="4JD2"/>
<dbReference type="BMRB" id="Q9ERL7"/>
<dbReference type="SMR" id="Q9ERL7"/>
<dbReference type="BioGRID" id="211012">
    <property type="interactions" value="4"/>
</dbReference>
<dbReference type="DIP" id="DIP-60543N"/>
<dbReference type="FunCoup" id="Q9ERL7">
    <property type="interactions" value="140"/>
</dbReference>
<dbReference type="IntAct" id="Q9ERL7">
    <property type="interactions" value="2"/>
</dbReference>
<dbReference type="STRING" id="10090.ENSMUSP00000103927"/>
<dbReference type="iPTMnet" id="Q9ERL7"/>
<dbReference type="PhosphoSitePlus" id="Q9ERL7"/>
<dbReference type="SwissPalm" id="Q9ERL7"/>
<dbReference type="jPOST" id="Q9ERL7"/>
<dbReference type="PaxDb" id="10090-ENSMUSP00000103927"/>
<dbReference type="ProteomicsDB" id="267732"/>
<dbReference type="Antibodypedia" id="16749">
    <property type="antibodies" value="213 antibodies from 27 providers"/>
</dbReference>
<dbReference type="DNASU" id="63986"/>
<dbReference type="Ensembl" id="ENSMUST00000078845.13">
    <property type="protein sequence ID" value="ENSMUSP00000077889.7"/>
    <property type="gene ID" value="ENSMUSG00000060791.16"/>
</dbReference>
<dbReference type="Ensembl" id="ENSMUST00000108292.9">
    <property type="protein sequence ID" value="ENSMUSP00000103927.3"/>
    <property type="gene ID" value="ENSMUSG00000060791.16"/>
</dbReference>
<dbReference type="GeneID" id="63986"/>
<dbReference type="KEGG" id="mmu:63986"/>
<dbReference type="UCSC" id="uc009fyx.1">
    <property type="organism name" value="mouse"/>
</dbReference>
<dbReference type="AGR" id="MGI:1927135"/>
<dbReference type="CTD" id="9535"/>
<dbReference type="MGI" id="MGI:1927135">
    <property type="gene designation" value="Gmfg"/>
</dbReference>
<dbReference type="VEuPathDB" id="HostDB:ENSMUSG00000060791"/>
<dbReference type="eggNOG" id="KOG1736">
    <property type="taxonomic scope" value="Eukaryota"/>
</dbReference>
<dbReference type="GeneTree" id="ENSGT00390000008920"/>
<dbReference type="HOGENOM" id="CLU_087056_1_0_1"/>
<dbReference type="InParanoid" id="Q9ERL7"/>
<dbReference type="OMA" id="KYVHGDG"/>
<dbReference type="OrthoDB" id="3919494at2759"/>
<dbReference type="PhylomeDB" id="Q9ERL7"/>
<dbReference type="TreeFam" id="TF315147"/>
<dbReference type="Reactome" id="R-MMU-6798695">
    <property type="pathway name" value="Neutrophil degranulation"/>
</dbReference>
<dbReference type="BioGRID-ORCS" id="63986">
    <property type="hits" value="0 hits in 76 CRISPR screens"/>
</dbReference>
<dbReference type="ChiTaRS" id="Gmfg">
    <property type="organism name" value="mouse"/>
</dbReference>
<dbReference type="EvolutionaryTrace" id="Q9ERL7"/>
<dbReference type="PRO" id="PR:Q9ERL7"/>
<dbReference type="Proteomes" id="UP000000589">
    <property type="component" value="Chromosome 7"/>
</dbReference>
<dbReference type="RNAct" id="Q9ERL7">
    <property type="molecule type" value="protein"/>
</dbReference>
<dbReference type="Bgee" id="ENSMUSG00000060791">
    <property type="expression patterns" value="Expressed in granulocyte and 72 other cell types or tissues"/>
</dbReference>
<dbReference type="ExpressionAtlas" id="Q9ERL7">
    <property type="expression patterns" value="baseline and differential"/>
</dbReference>
<dbReference type="GO" id="GO:0003779">
    <property type="term" value="F:actin binding"/>
    <property type="evidence" value="ECO:0007669"/>
    <property type="project" value="InterPro"/>
</dbReference>
<dbReference type="GO" id="GO:0071933">
    <property type="term" value="F:Arp2/3 complex binding"/>
    <property type="evidence" value="ECO:0000266"/>
    <property type="project" value="MGI"/>
</dbReference>
<dbReference type="GO" id="GO:0008083">
    <property type="term" value="F:growth factor activity"/>
    <property type="evidence" value="ECO:0007669"/>
    <property type="project" value="UniProtKB-KW"/>
</dbReference>
<dbReference type="GO" id="GO:0071846">
    <property type="term" value="P:actin filament debranching"/>
    <property type="evidence" value="ECO:0000314"/>
    <property type="project" value="MGI"/>
</dbReference>
<dbReference type="GO" id="GO:0034316">
    <property type="term" value="P:negative regulation of Arp2/3 complex-mediated actin nucleation"/>
    <property type="evidence" value="ECO:0000314"/>
    <property type="project" value="MGI"/>
</dbReference>
<dbReference type="CDD" id="cd11283">
    <property type="entry name" value="ADF_GMF-beta_like"/>
    <property type="match status" value="1"/>
</dbReference>
<dbReference type="FunFam" id="3.40.20.10:FF:000024">
    <property type="entry name" value="Glia maturation factor"/>
    <property type="match status" value="1"/>
</dbReference>
<dbReference type="Gene3D" id="3.40.20.10">
    <property type="entry name" value="Severin"/>
    <property type="match status" value="1"/>
</dbReference>
<dbReference type="InterPro" id="IPR002108">
    <property type="entry name" value="ADF-H"/>
</dbReference>
<dbReference type="InterPro" id="IPR029006">
    <property type="entry name" value="ADF-H/Gelsolin-like_dom_sf"/>
</dbReference>
<dbReference type="InterPro" id="IPR011171">
    <property type="entry name" value="GMF"/>
</dbReference>
<dbReference type="PANTHER" id="PTHR11249:SF4">
    <property type="entry name" value="GLIA MATURATION FACTOR GAMMA"/>
    <property type="match status" value="1"/>
</dbReference>
<dbReference type="PANTHER" id="PTHR11249">
    <property type="entry name" value="GLIAL FACTOR NATURATION FACTOR"/>
    <property type="match status" value="1"/>
</dbReference>
<dbReference type="Pfam" id="PF00241">
    <property type="entry name" value="Cofilin_ADF"/>
    <property type="match status" value="1"/>
</dbReference>
<dbReference type="PIRSF" id="PIRSF001788">
    <property type="entry name" value="GMF-beta"/>
    <property type="match status" value="1"/>
</dbReference>
<dbReference type="SMART" id="SM00102">
    <property type="entry name" value="ADF"/>
    <property type="match status" value="1"/>
</dbReference>
<dbReference type="SUPFAM" id="SSF55753">
    <property type="entry name" value="Actin depolymerizing proteins"/>
    <property type="match status" value="1"/>
</dbReference>
<dbReference type="PROSITE" id="PS51263">
    <property type="entry name" value="ADF_H"/>
    <property type="match status" value="1"/>
</dbReference>
<comment type="similarity">
    <text evidence="3">Belongs to the actin-binding proteins ADF family. GMF subfamily.</text>
</comment>
<accession>Q9ERL7</accession>
<protein>
    <recommendedName>
        <fullName>Glia maturation factor gamma</fullName>
        <shortName>GMF-gamma</shortName>
    </recommendedName>
</protein>